<accession>Q0PIT9</accession>
<sequence>MSGLRALLGLGLPVAGSRLPRVRVQAGACRARPTWWGPQRLISGGRGDVEGMASSAVKYLSQEEAQAVDQELFNEYQFSVDQLMELAGLSCATAIAKVYPPTSLSRSPPTVLVICGPGNNGGDGLVCARHLKLFGYHPTIYYPKRPNKPLFTALVTQCQKMDIPFLDEMPSEPTLIDELYELVVDAIFGFSFKGEVREPFRSILSVLNGLTVPIASIDIPSGWDVERGNSGGIQPDLLISLTAPKKSAAQFTGRYHYLGGRFVPPALEKKYQLNLPPYPDTECVYRLQ</sequence>
<protein>
    <recommendedName>
        <fullName evidence="3">NAD(P)H-hydrate epimerase</fullName>
        <ecNumber evidence="2">5.1.99.6</ecNumber>
    </recommendedName>
    <alternativeName>
        <fullName evidence="3">Apolipoprotein A-I-binding protein</fullName>
        <shortName evidence="3">AI-BP</shortName>
    </alternativeName>
    <alternativeName>
        <fullName evidence="2">NAD(P)HX epimerase</fullName>
    </alternativeName>
</protein>
<dbReference type="EC" id="5.1.99.6" evidence="2"/>
<dbReference type="EMBL" id="DQ826508">
    <property type="protein sequence ID" value="ABH01264.1"/>
    <property type="molecule type" value="mRNA"/>
</dbReference>
<dbReference type="RefSeq" id="NP_001072132.1">
    <property type="nucleotide sequence ID" value="NM_001078664.1"/>
</dbReference>
<dbReference type="SMR" id="Q0PIT9"/>
<dbReference type="FunCoup" id="Q0PIT9">
    <property type="interactions" value="1478"/>
</dbReference>
<dbReference type="STRING" id="9823.ENSSSCP00000066733"/>
<dbReference type="PaxDb" id="9823-ENSSSCP00000006906"/>
<dbReference type="PeptideAtlas" id="Q0PIT9"/>
<dbReference type="GeneID" id="780405"/>
<dbReference type="KEGG" id="ssc:780405"/>
<dbReference type="CTD" id="128240"/>
<dbReference type="eggNOG" id="KOG2585">
    <property type="taxonomic scope" value="Eukaryota"/>
</dbReference>
<dbReference type="InParanoid" id="Q0PIT9"/>
<dbReference type="OrthoDB" id="10064708at2759"/>
<dbReference type="Proteomes" id="UP000008227">
    <property type="component" value="Unplaced"/>
</dbReference>
<dbReference type="Proteomes" id="UP000314985">
    <property type="component" value="Unplaced"/>
</dbReference>
<dbReference type="Proteomes" id="UP000694570">
    <property type="component" value="Unplaced"/>
</dbReference>
<dbReference type="Proteomes" id="UP000694571">
    <property type="component" value="Unplaced"/>
</dbReference>
<dbReference type="Proteomes" id="UP000694720">
    <property type="component" value="Unplaced"/>
</dbReference>
<dbReference type="Proteomes" id="UP000694722">
    <property type="component" value="Unplaced"/>
</dbReference>
<dbReference type="Proteomes" id="UP000694723">
    <property type="component" value="Unplaced"/>
</dbReference>
<dbReference type="Proteomes" id="UP000694724">
    <property type="component" value="Unplaced"/>
</dbReference>
<dbReference type="Proteomes" id="UP000694725">
    <property type="component" value="Unplaced"/>
</dbReference>
<dbReference type="Proteomes" id="UP000694726">
    <property type="component" value="Unplaced"/>
</dbReference>
<dbReference type="Proteomes" id="UP000694727">
    <property type="component" value="Unplaced"/>
</dbReference>
<dbReference type="Proteomes" id="UP000694728">
    <property type="component" value="Unplaced"/>
</dbReference>
<dbReference type="GO" id="GO:0005615">
    <property type="term" value="C:extracellular space"/>
    <property type="evidence" value="ECO:0007005"/>
    <property type="project" value="BHF-UCL"/>
</dbReference>
<dbReference type="GO" id="GO:0005739">
    <property type="term" value="C:mitochondrion"/>
    <property type="evidence" value="ECO:0000318"/>
    <property type="project" value="GO_Central"/>
</dbReference>
<dbReference type="GO" id="GO:0046872">
    <property type="term" value="F:metal ion binding"/>
    <property type="evidence" value="ECO:0007669"/>
    <property type="project" value="UniProtKB-KW"/>
</dbReference>
<dbReference type="GO" id="GO:0052856">
    <property type="term" value="F:NAD(P)HX epimerase activity"/>
    <property type="evidence" value="ECO:0000318"/>
    <property type="project" value="GO_Central"/>
</dbReference>
<dbReference type="GO" id="GO:0000166">
    <property type="term" value="F:nucleotide binding"/>
    <property type="evidence" value="ECO:0007669"/>
    <property type="project" value="UniProtKB-KW"/>
</dbReference>
<dbReference type="GO" id="GO:0006869">
    <property type="term" value="P:lipid transport"/>
    <property type="evidence" value="ECO:0007669"/>
    <property type="project" value="UniProtKB-KW"/>
</dbReference>
<dbReference type="GO" id="GO:0031580">
    <property type="term" value="P:membrane raft distribution"/>
    <property type="evidence" value="ECO:0000250"/>
    <property type="project" value="UniProtKB"/>
</dbReference>
<dbReference type="GO" id="GO:0016525">
    <property type="term" value="P:negative regulation of angiogenesis"/>
    <property type="evidence" value="ECO:0000250"/>
    <property type="project" value="UniProtKB"/>
</dbReference>
<dbReference type="GO" id="GO:0046496">
    <property type="term" value="P:nicotinamide nucleotide metabolic process"/>
    <property type="evidence" value="ECO:0000250"/>
    <property type="project" value="UniProtKB"/>
</dbReference>
<dbReference type="GO" id="GO:0010874">
    <property type="term" value="P:regulation of cholesterol efflux"/>
    <property type="evidence" value="ECO:0000250"/>
    <property type="project" value="UniProtKB"/>
</dbReference>
<dbReference type="GO" id="GO:0002040">
    <property type="term" value="P:sprouting angiogenesis"/>
    <property type="evidence" value="ECO:0000250"/>
    <property type="project" value="UniProtKB"/>
</dbReference>
<dbReference type="FunFam" id="3.40.50.10260:FF:000002">
    <property type="entry name" value="NAD(P)H-hydrate epimerase"/>
    <property type="match status" value="1"/>
</dbReference>
<dbReference type="Gene3D" id="3.40.50.10260">
    <property type="entry name" value="YjeF N-terminal domain"/>
    <property type="match status" value="1"/>
</dbReference>
<dbReference type="HAMAP" id="MF_01966">
    <property type="entry name" value="NADHX_epimerase"/>
    <property type="match status" value="1"/>
</dbReference>
<dbReference type="InterPro" id="IPR004443">
    <property type="entry name" value="YjeF_N_dom"/>
</dbReference>
<dbReference type="InterPro" id="IPR036652">
    <property type="entry name" value="YjeF_N_dom_sf"/>
</dbReference>
<dbReference type="InterPro" id="IPR032976">
    <property type="entry name" value="YJEFN_prot_NAXE-like"/>
</dbReference>
<dbReference type="NCBIfam" id="TIGR00197">
    <property type="entry name" value="yjeF_nterm"/>
    <property type="match status" value="1"/>
</dbReference>
<dbReference type="PANTHER" id="PTHR13232">
    <property type="entry name" value="NAD(P)H-HYDRATE EPIMERASE"/>
    <property type="match status" value="1"/>
</dbReference>
<dbReference type="PANTHER" id="PTHR13232:SF11">
    <property type="entry name" value="NAD(P)H-HYDRATE EPIMERASE"/>
    <property type="match status" value="1"/>
</dbReference>
<dbReference type="Pfam" id="PF03853">
    <property type="entry name" value="YjeF_N"/>
    <property type="match status" value="1"/>
</dbReference>
<dbReference type="SUPFAM" id="SSF64153">
    <property type="entry name" value="YjeF N-terminal domain-like"/>
    <property type="match status" value="1"/>
</dbReference>
<dbReference type="PROSITE" id="PS51385">
    <property type="entry name" value="YJEF_N"/>
    <property type="match status" value="1"/>
</dbReference>
<gene>
    <name evidence="2" type="primary">NAXE</name>
    <name evidence="3" type="synonym">AIBP</name>
    <name evidence="3" type="synonym">APOA1BP</name>
</gene>
<evidence type="ECO:0000250" key="1">
    <source>
        <dbReference type="UniProtKB" id="Q8K4Z3"/>
    </source>
</evidence>
<evidence type="ECO:0000250" key="2">
    <source>
        <dbReference type="UniProtKB" id="Q8NCW5"/>
    </source>
</evidence>
<evidence type="ECO:0000255" key="3">
    <source>
        <dbReference type="HAMAP-Rule" id="MF_03159"/>
    </source>
</evidence>
<comment type="function">
    <text evidence="2 3">Catalyzes the epimerization of the S- and R-forms of NAD(P)HX, a damaged form of NAD(P)H that is a result of enzymatic or heat-dependent hydration. This is a prerequisite for the S-specific NAD(P)H-hydrate dehydratase to allow the repair of both epimers of NAD(P)HX. Accelerates cholesterol efflux from endothelial cells to high-density lipoprotein (HDL) and thereby regulates angiogenesis (By similarity).</text>
</comment>
<comment type="catalytic activity">
    <reaction evidence="2">
        <text>(6R)-NADHX = (6S)-NADHX</text>
        <dbReference type="Rhea" id="RHEA:32215"/>
        <dbReference type="ChEBI" id="CHEBI:64074"/>
        <dbReference type="ChEBI" id="CHEBI:64075"/>
        <dbReference type="EC" id="5.1.99.6"/>
    </reaction>
</comment>
<comment type="catalytic activity">
    <reaction evidence="2">
        <text>(6R)-NADPHX = (6S)-NADPHX</text>
        <dbReference type="Rhea" id="RHEA:32227"/>
        <dbReference type="ChEBI" id="CHEBI:64076"/>
        <dbReference type="ChEBI" id="CHEBI:64077"/>
        <dbReference type="EC" id="5.1.99.6"/>
    </reaction>
</comment>
<comment type="cofactor">
    <cofactor evidence="3">
        <name>K(+)</name>
        <dbReference type="ChEBI" id="CHEBI:29103"/>
    </cofactor>
    <text evidence="3">Binds 1 potassium ion per subunit.</text>
</comment>
<comment type="subunit">
    <text evidence="1 2">Homodimer (By similarity). Interacts with APOA1 and APOA2 (By similarity).</text>
</comment>
<comment type="subcellular location">
    <subcellularLocation>
        <location evidence="3">Mitochondrion</location>
    </subcellularLocation>
    <subcellularLocation>
        <location evidence="3">Secreted</location>
    </subcellularLocation>
    <text evidence="3">In sperm, secretion gradually increases during capacitation.</text>
</comment>
<comment type="PTM">
    <text evidence="3">Undergoes physiological phosphorylation during sperm capacitation, downstream to PKA activation.</text>
</comment>
<comment type="similarity">
    <text evidence="3">Belongs to the NnrE/AIBP family.</text>
</comment>
<keyword id="KW-0413">Isomerase</keyword>
<keyword id="KW-0445">Lipid transport</keyword>
<keyword id="KW-0479">Metal-binding</keyword>
<keyword id="KW-0496">Mitochondrion</keyword>
<keyword id="KW-0520">NAD</keyword>
<keyword id="KW-0521">NADP</keyword>
<keyword id="KW-0547">Nucleotide-binding</keyword>
<keyword id="KW-0630">Potassium</keyword>
<keyword id="KW-1185">Reference proteome</keyword>
<keyword id="KW-0964">Secreted</keyword>
<keyword id="KW-0809">Transit peptide</keyword>
<keyword id="KW-0813">Transport</keyword>
<organism>
    <name type="scientific">Sus scrofa</name>
    <name type="common">Pig</name>
    <dbReference type="NCBI Taxonomy" id="9823"/>
    <lineage>
        <taxon>Eukaryota</taxon>
        <taxon>Metazoa</taxon>
        <taxon>Chordata</taxon>
        <taxon>Craniata</taxon>
        <taxon>Vertebrata</taxon>
        <taxon>Euteleostomi</taxon>
        <taxon>Mammalia</taxon>
        <taxon>Eutheria</taxon>
        <taxon>Laurasiatheria</taxon>
        <taxon>Artiodactyla</taxon>
        <taxon>Suina</taxon>
        <taxon>Suidae</taxon>
        <taxon>Sus</taxon>
    </lineage>
</organism>
<feature type="transit peptide" description="Mitochondrion" evidence="3">
    <location>
        <begin position="1"/>
        <end position="59"/>
    </location>
</feature>
<feature type="chain" id="PRO_0000292424" description="NAD(P)H-hydrate epimerase">
    <location>
        <begin position="60"/>
        <end position="288"/>
    </location>
</feature>
<feature type="domain" description="YjeF N-terminal" evidence="3">
    <location>
        <begin position="65"/>
        <end position="275"/>
    </location>
</feature>
<feature type="binding site" evidence="3">
    <location>
        <begin position="119"/>
        <end position="123"/>
    </location>
    <ligand>
        <name>(6S)-NADPHX</name>
        <dbReference type="ChEBI" id="CHEBI:64076"/>
    </ligand>
</feature>
<feature type="binding site" evidence="3">
    <location>
        <position position="120"/>
    </location>
    <ligand>
        <name>K(+)</name>
        <dbReference type="ChEBI" id="CHEBI:29103"/>
    </ligand>
</feature>
<feature type="binding site" evidence="3">
    <location>
        <position position="185"/>
    </location>
    <ligand>
        <name>K(+)</name>
        <dbReference type="ChEBI" id="CHEBI:29103"/>
    </ligand>
</feature>
<feature type="binding site" evidence="3">
    <location>
        <begin position="189"/>
        <end position="195"/>
    </location>
    <ligand>
        <name>(6S)-NADPHX</name>
        <dbReference type="ChEBI" id="CHEBI:64076"/>
    </ligand>
</feature>
<feature type="binding site" evidence="3">
    <location>
        <position position="218"/>
    </location>
    <ligand>
        <name>(6S)-NADPHX</name>
        <dbReference type="ChEBI" id="CHEBI:64076"/>
    </ligand>
</feature>
<feature type="binding site" evidence="3">
    <location>
        <position position="221"/>
    </location>
    <ligand>
        <name>K(+)</name>
        <dbReference type="ChEBI" id="CHEBI:29103"/>
    </ligand>
</feature>
<feature type="modified residue" description="N6-succinyllysine" evidence="1">
    <location>
        <position position="144"/>
    </location>
</feature>
<reference key="1">
    <citation type="submission" date="2006-06" db="EMBL/GenBank/DDBJ databases">
        <title>Cloning and sequence analysis of pig AIBP gene.</title>
        <authorList>
            <person name="Huang T."/>
            <person name="Xiong Y.-Z."/>
            <person name="Huang J.-S."/>
            <person name="Xu D.-Q."/>
        </authorList>
    </citation>
    <scope>NUCLEOTIDE SEQUENCE [MRNA]</scope>
</reference>
<name>NNRE_PIG</name>
<proteinExistence type="evidence at transcript level"/>